<gene>
    <name evidence="1" type="primary">gpsA</name>
    <name type="ordered locus">ECH74115_4981</name>
</gene>
<feature type="chain" id="PRO_1000190144" description="Glycerol-3-phosphate dehydrogenase [NAD(P)+]">
    <location>
        <begin position="1"/>
        <end position="339"/>
    </location>
</feature>
<feature type="active site" description="Proton acceptor" evidence="1">
    <location>
        <position position="195"/>
    </location>
</feature>
<feature type="binding site" evidence="1">
    <location>
        <position position="15"/>
    </location>
    <ligand>
        <name>NADPH</name>
        <dbReference type="ChEBI" id="CHEBI:57783"/>
    </ligand>
</feature>
<feature type="binding site" evidence="1">
    <location>
        <position position="16"/>
    </location>
    <ligand>
        <name>NADPH</name>
        <dbReference type="ChEBI" id="CHEBI:57783"/>
    </ligand>
</feature>
<feature type="binding site" evidence="1">
    <location>
        <position position="36"/>
    </location>
    <ligand>
        <name>NADPH</name>
        <dbReference type="ChEBI" id="CHEBI:57783"/>
    </ligand>
</feature>
<feature type="binding site" evidence="1">
    <location>
        <position position="110"/>
    </location>
    <ligand>
        <name>NADPH</name>
        <dbReference type="ChEBI" id="CHEBI:57783"/>
    </ligand>
</feature>
<feature type="binding site" evidence="1">
    <location>
        <position position="110"/>
    </location>
    <ligand>
        <name>sn-glycerol 3-phosphate</name>
        <dbReference type="ChEBI" id="CHEBI:57597"/>
    </ligand>
</feature>
<feature type="binding site" evidence="1">
    <location>
        <position position="139"/>
    </location>
    <ligand>
        <name>sn-glycerol 3-phosphate</name>
        <dbReference type="ChEBI" id="CHEBI:57597"/>
    </ligand>
</feature>
<feature type="binding site" evidence="1">
    <location>
        <position position="141"/>
    </location>
    <ligand>
        <name>sn-glycerol 3-phosphate</name>
        <dbReference type="ChEBI" id="CHEBI:57597"/>
    </ligand>
</feature>
<feature type="binding site" evidence="1">
    <location>
        <position position="143"/>
    </location>
    <ligand>
        <name>NADPH</name>
        <dbReference type="ChEBI" id="CHEBI:57783"/>
    </ligand>
</feature>
<feature type="binding site" evidence="1">
    <location>
        <position position="195"/>
    </location>
    <ligand>
        <name>sn-glycerol 3-phosphate</name>
        <dbReference type="ChEBI" id="CHEBI:57597"/>
    </ligand>
</feature>
<feature type="binding site" evidence="1">
    <location>
        <position position="248"/>
    </location>
    <ligand>
        <name>sn-glycerol 3-phosphate</name>
        <dbReference type="ChEBI" id="CHEBI:57597"/>
    </ligand>
</feature>
<feature type="binding site" evidence="1">
    <location>
        <position position="258"/>
    </location>
    <ligand>
        <name>sn-glycerol 3-phosphate</name>
        <dbReference type="ChEBI" id="CHEBI:57597"/>
    </ligand>
</feature>
<feature type="binding site" evidence="1">
    <location>
        <position position="259"/>
    </location>
    <ligand>
        <name>NADPH</name>
        <dbReference type="ChEBI" id="CHEBI:57783"/>
    </ligand>
</feature>
<feature type="binding site" evidence="1">
    <location>
        <position position="259"/>
    </location>
    <ligand>
        <name>sn-glycerol 3-phosphate</name>
        <dbReference type="ChEBI" id="CHEBI:57597"/>
    </ligand>
</feature>
<feature type="binding site" evidence="1">
    <location>
        <position position="260"/>
    </location>
    <ligand>
        <name>sn-glycerol 3-phosphate</name>
        <dbReference type="ChEBI" id="CHEBI:57597"/>
    </ligand>
</feature>
<feature type="binding site" evidence="1">
    <location>
        <position position="283"/>
    </location>
    <ligand>
        <name>NADPH</name>
        <dbReference type="ChEBI" id="CHEBI:57783"/>
    </ligand>
</feature>
<feature type="binding site" evidence="1">
    <location>
        <position position="285"/>
    </location>
    <ligand>
        <name>NADPH</name>
        <dbReference type="ChEBI" id="CHEBI:57783"/>
    </ligand>
</feature>
<comment type="function">
    <text evidence="1">Catalyzes the reduction of the glycolytic intermediate dihydroxyacetone phosphate (DHAP) to sn-glycerol 3-phosphate (G3P), the key precursor for phospholipid synthesis.</text>
</comment>
<comment type="catalytic activity">
    <reaction evidence="1">
        <text>sn-glycerol 3-phosphate + NAD(+) = dihydroxyacetone phosphate + NADH + H(+)</text>
        <dbReference type="Rhea" id="RHEA:11092"/>
        <dbReference type="ChEBI" id="CHEBI:15378"/>
        <dbReference type="ChEBI" id="CHEBI:57540"/>
        <dbReference type="ChEBI" id="CHEBI:57597"/>
        <dbReference type="ChEBI" id="CHEBI:57642"/>
        <dbReference type="ChEBI" id="CHEBI:57945"/>
        <dbReference type="EC" id="1.1.1.94"/>
    </reaction>
    <physiologicalReaction direction="right-to-left" evidence="1">
        <dbReference type="Rhea" id="RHEA:11094"/>
    </physiologicalReaction>
</comment>
<comment type="catalytic activity">
    <reaction evidence="1">
        <text>sn-glycerol 3-phosphate + NADP(+) = dihydroxyacetone phosphate + NADPH + H(+)</text>
        <dbReference type="Rhea" id="RHEA:11096"/>
        <dbReference type="ChEBI" id="CHEBI:15378"/>
        <dbReference type="ChEBI" id="CHEBI:57597"/>
        <dbReference type="ChEBI" id="CHEBI:57642"/>
        <dbReference type="ChEBI" id="CHEBI:57783"/>
        <dbReference type="ChEBI" id="CHEBI:58349"/>
        <dbReference type="EC" id="1.1.1.94"/>
    </reaction>
    <physiologicalReaction direction="right-to-left" evidence="1">
        <dbReference type="Rhea" id="RHEA:11098"/>
    </physiologicalReaction>
</comment>
<comment type="pathway">
    <text evidence="1">Membrane lipid metabolism; glycerophospholipid metabolism.</text>
</comment>
<comment type="subcellular location">
    <subcellularLocation>
        <location evidence="1">Cytoplasm</location>
    </subcellularLocation>
</comment>
<comment type="similarity">
    <text evidence="1">Belongs to the NAD-dependent glycerol-3-phosphate dehydrogenase family.</text>
</comment>
<organism>
    <name type="scientific">Escherichia coli O157:H7 (strain EC4115 / EHEC)</name>
    <dbReference type="NCBI Taxonomy" id="444450"/>
    <lineage>
        <taxon>Bacteria</taxon>
        <taxon>Pseudomonadati</taxon>
        <taxon>Pseudomonadota</taxon>
        <taxon>Gammaproteobacteria</taxon>
        <taxon>Enterobacterales</taxon>
        <taxon>Enterobacteriaceae</taxon>
        <taxon>Escherichia</taxon>
    </lineage>
</organism>
<keyword id="KW-0963">Cytoplasm</keyword>
<keyword id="KW-0444">Lipid biosynthesis</keyword>
<keyword id="KW-0443">Lipid metabolism</keyword>
<keyword id="KW-0520">NAD</keyword>
<keyword id="KW-0521">NADP</keyword>
<keyword id="KW-0547">Nucleotide-binding</keyword>
<keyword id="KW-0560">Oxidoreductase</keyword>
<keyword id="KW-0594">Phospholipid biosynthesis</keyword>
<keyword id="KW-1208">Phospholipid metabolism</keyword>
<sequence>MNQRNASMTVIGAGSYGTALAITLARNGHEVVLWGHDPEHIATLERDRCNAAFLPDVPFPDTLHLESDLATALAASRNILVVVPSHVFGEVLRQIKPLMRPDARLVWATKGLEAETGRLLQDVAREALGDQIPLAVISGPTFAKELAAGLPTAISLASTDQTFADDLQQLLHCGKSFRVYSNPDFIGVQLGGAVKNVIAIGAGMSDGIGFGANARTALITRGLAEMSRLGAALGADPATFMGMAGLGDLVLTCTDNQSRNRRFGMMLGQGMDVQSAQEKIGQVVEGYRNTKEVRELAHRFGVEMPITEEIYQVLYCGKNAREAALTLLGRARKDERSSH</sequence>
<proteinExistence type="inferred from homology"/>
<accession>B5YWB0</accession>
<name>GPDA_ECO5E</name>
<protein>
    <recommendedName>
        <fullName evidence="1">Glycerol-3-phosphate dehydrogenase [NAD(P)+]</fullName>
        <ecNumber evidence="1">1.1.1.94</ecNumber>
    </recommendedName>
    <alternativeName>
        <fullName evidence="1">NAD(P)(+)-dependent glycerol-3-phosphate dehydrogenase</fullName>
    </alternativeName>
    <alternativeName>
        <fullName evidence="1">NAD(P)H-dependent dihydroxyacetone-phosphate reductase</fullName>
    </alternativeName>
</protein>
<evidence type="ECO:0000255" key="1">
    <source>
        <dbReference type="HAMAP-Rule" id="MF_00394"/>
    </source>
</evidence>
<reference key="1">
    <citation type="journal article" date="2011" name="Proc. Natl. Acad. Sci. U.S.A.">
        <title>Genomic anatomy of Escherichia coli O157:H7 outbreaks.</title>
        <authorList>
            <person name="Eppinger M."/>
            <person name="Mammel M.K."/>
            <person name="Leclerc J.E."/>
            <person name="Ravel J."/>
            <person name="Cebula T.A."/>
        </authorList>
    </citation>
    <scope>NUCLEOTIDE SEQUENCE [LARGE SCALE GENOMIC DNA]</scope>
    <source>
        <strain>EC4115 / EHEC</strain>
    </source>
</reference>
<dbReference type="EC" id="1.1.1.94" evidence="1"/>
<dbReference type="EMBL" id="CP001164">
    <property type="protein sequence ID" value="ACI37131.1"/>
    <property type="molecule type" value="Genomic_DNA"/>
</dbReference>
<dbReference type="RefSeq" id="WP_001076194.1">
    <property type="nucleotide sequence ID" value="NC_011353.1"/>
</dbReference>
<dbReference type="SMR" id="B5YWB0"/>
<dbReference type="GeneID" id="93778322"/>
<dbReference type="KEGG" id="ecf:ECH74115_4981"/>
<dbReference type="HOGENOM" id="CLU_033449_0_2_6"/>
<dbReference type="UniPathway" id="UPA00940"/>
<dbReference type="GO" id="GO:0005829">
    <property type="term" value="C:cytosol"/>
    <property type="evidence" value="ECO:0007669"/>
    <property type="project" value="TreeGrafter"/>
</dbReference>
<dbReference type="GO" id="GO:0047952">
    <property type="term" value="F:glycerol-3-phosphate dehydrogenase [NAD(P)+] activity"/>
    <property type="evidence" value="ECO:0007669"/>
    <property type="project" value="UniProtKB-UniRule"/>
</dbReference>
<dbReference type="GO" id="GO:0051287">
    <property type="term" value="F:NAD binding"/>
    <property type="evidence" value="ECO:0007669"/>
    <property type="project" value="InterPro"/>
</dbReference>
<dbReference type="GO" id="GO:0005975">
    <property type="term" value="P:carbohydrate metabolic process"/>
    <property type="evidence" value="ECO:0007669"/>
    <property type="project" value="InterPro"/>
</dbReference>
<dbReference type="GO" id="GO:0046167">
    <property type="term" value="P:glycerol-3-phosphate biosynthetic process"/>
    <property type="evidence" value="ECO:0007669"/>
    <property type="project" value="UniProtKB-UniRule"/>
</dbReference>
<dbReference type="GO" id="GO:0046168">
    <property type="term" value="P:glycerol-3-phosphate catabolic process"/>
    <property type="evidence" value="ECO:0007669"/>
    <property type="project" value="InterPro"/>
</dbReference>
<dbReference type="GO" id="GO:0046474">
    <property type="term" value="P:glycerophospholipid biosynthetic process"/>
    <property type="evidence" value="ECO:0007669"/>
    <property type="project" value="TreeGrafter"/>
</dbReference>
<dbReference type="FunFam" id="1.10.1040.10:FF:000001">
    <property type="entry name" value="Glycerol-3-phosphate dehydrogenase [NAD(P)+]"/>
    <property type="match status" value="1"/>
</dbReference>
<dbReference type="FunFam" id="3.40.50.720:FF:000019">
    <property type="entry name" value="Glycerol-3-phosphate dehydrogenase [NAD(P)+]"/>
    <property type="match status" value="1"/>
</dbReference>
<dbReference type="Gene3D" id="1.10.1040.10">
    <property type="entry name" value="N-(1-d-carboxylethyl)-l-norvaline Dehydrogenase, domain 2"/>
    <property type="match status" value="1"/>
</dbReference>
<dbReference type="Gene3D" id="3.40.50.720">
    <property type="entry name" value="NAD(P)-binding Rossmann-like Domain"/>
    <property type="match status" value="1"/>
</dbReference>
<dbReference type="HAMAP" id="MF_00394">
    <property type="entry name" value="NAD_Glyc3P_dehydrog"/>
    <property type="match status" value="1"/>
</dbReference>
<dbReference type="InterPro" id="IPR008927">
    <property type="entry name" value="6-PGluconate_DH-like_C_sf"/>
</dbReference>
<dbReference type="InterPro" id="IPR013328">
    <property type="entry name" value="6PGD_dom2"/>
</dbReference>
<dbReference type="InterPro" id="IPR006168">
    <property type="entry name" value="G3P_DH_NAD-dep"/>
</dbReference>
<dbReference type="InterPro" id="IPR006109">
    <property type="entry name" value="G3P_DH_NAD-dep_C"/>
</dbReference>
<dbReference type="InterPro" id="IPR011128">
    <property type="entry name" value="G3P_DH_NAD-dep_N"/>
</dbReference>
<dbReference type="InterPro" id="IPR036291">
    <property type="entry name" value="NAD(P)-bd_dom_sf"/>
</dbReference>
<dbReference type="NCBIfam" id="NF000939">
    <property type="entry name" value="PRK00094.1-1"/>
    <property type="match status" value="1"/>
</dbReference>
<dbReference type="NCBIfam" id="NF000940">
    <property type="entry name" value="PRK00094.1-2"/>
    <property type="match status" value="1"/>
</dbReference>
<dbReference type="NCBIfam" id="NF000942">
    <property type="entry name" value="PRK00094.1-4"/>
    <property type="match status" value="1"/>
</dbReference>
<dbReference type="PANTHER" id="PTHR11728">
    <property type="entry name" value="GLYCEROL-3-PHOSPHATE DEHYDROGENASE"/>
    <property type="match status" value="1"/>
</dbReference>
<dbReference type="PANTHER" id="PTHR11728:SF1">
    <property type="entry name" value="GLYCEROL-3-PHOSPHATE DEHYDROGENASE [NAD(+)] 2, CHLOROPLASTIC"/>
    <property type="match status" value="1"/>
</dbReference>
<dbReference type="Pfam" id="PF07479">
    <property type="entry name" value="NAD_Gly3P_dh_C"/>
    <property type="match status" value="1"/>
</dbReference>
<dbReference type="Pfam" id="PF01210">
    <property type="entry name" value="NAD_Gly3P_dh_N"/>
    <property type="match status" value="1"/>
</dbReference>
<dbReference type="PIRSF" id="PIRSF000114">
    <property type="entry name" value="Glycerol-3-P_dh"/>
    <property type="match status" value="1"/>
</dbReference>
<dbReference type="PRINTS" id="PR00077">
    <property type="entry name" value="GPDHDRGNASE"/>
</dbReference>
<dbReference type="SUPFAM" id="SSF48179">
    <property type="entry name" value="6-phosphogluconate dehydrogenase C-terminal domain-like"/>
    <property type="match status" value="1"/>
</dbReference>
<dbReference type="SUPFAM" id="SSF51735">
    <property type="entry name" value="NAD(P)-binding Rossmann-fold domains"/>
    <property type="match status" value="1"/>
</dbReference>
<dbReference type="PROSITE" id="PS00957">
    <property type="entry name" value="NAD_G3PDH"/>
    <property type="match status" value="1"/>
</dbReference>